<feature type="chain" id="PRO_0000131654" description="Small ribosomal subunit protein uS5">
    <location>
        <begin position="1"/>
        <end position="221"/>
    </location>
</feature>
<feature type="domain" description="S5 DRBM" evidence="1">
    <location>
        <begin position="46"/>
        <end position="109"/>
    </location>
</feature>
<gene>
    <name evidence="1" type="primary">rps5</name>
    <name type="ordered locus">PTO0660</name>
</gene>
<protein>
    <recommendedName>
        <fullName evidence="1">Small ribosomal subunit protein uS5</fullName>
    </recommendedName>
    <alternativeName>
        <fullName evidence="2">30S ribosomal protein S5</fullName>
    </alternativeName>
</protein>
<organism>
    <name type="scientific">Picrophilus torridus (strain ATCC 700027 / DSM 9790 / JCM 10055 / NBRC 100828 / KAW 2/3)</name>
    <dbReference type="NCBI Taxonomy" id="1122961"/>
    <lineage>
        <taxon>Archaea</taxon>
        <taxon>Methanobacteriati</taxon>
        <taxon>Thermoplasmatota</taxon>
        <taxon>Thermoplasmata</taxon>
        <taxon>Thermoplasmatales</taxon>
        <taxon>Picrophilaceae</taxon>
        <taxon>Picrophilus</taxon>
    </lineage>
</organism>
<proteinExistence type="inferred from homology"/>
<reference key="1">
    <citation type="journal article" date="2004" name="Proc. Natl. Acad. Sci. U.S.A.">
        <title>Genome sequence of Picrophilus torridus and its implications for life around pH 0.</title>
        <authorList>
            <person name="Fuetterer O."/>
            <person name="Angelov A."/>
            <person name="Liesegang H."/>
            <person name="Gottschalk G."/>
            <person name="Schleper C."/>
            <person name="Schepers B."/>
            <person name="Dock C."/>
            <person name="Antranikian G."/>
            <person name="Liebl W."/>
        </authorList>
    </citation>
    <scope>NUCLEOTIDE SEQUENCE [LARGE SCALE GENOMIC DNA]</scope>
    <source>
        <strain>ATCC 700027 / DSM 9790 / JCM 10055 / NBRC 100828 / KAW 2/3</strain>
    </source>
</reference>
<sequence length="221" mass="23602">MDEEWTPRTELGRLVANGEIKTISEALHSKLPLKEYQIVDYLIPDLKDEVINIERAQRMTDSGRRMNYSITAVVGNGNGYVGVGRGKAKEAAPAIKKAIDNAKLNIIEIKRGCGSWECGCGKPHTLPFLVNGKSGSVSVTLKPAPQGVGLAVGDVVKVILRMAGIDDAWGFAAGHTKTTVNYALATFDALKKTVSIKINPKINLSTPIYVGGIGNAGSNKD</sequence>
<dbReference type="EMBL" id="AE017261">
    <property type="protein sequence ID" value="AAT43245.1"/>
    <property type="molecule type" value="Genomic_DNA"/>
</dbReference>
<dbReference type="RefSeq" id="WP_011177461.1">
    <property type="nucleotide sequence ID" value="NC_005877.1"/>
</dbReference>
<dbReference type="SMR" id="Q6L1A7"/>
<dbReference type="FunCoup" id="Q6L1A7">
    <property type="interactions" value="207"/>
</dbReference>
<dbReference type="STRING" id="263820.PTO0660"/>
<dbReference type="PaxDb" id="263820-PTO0660"/>
<dbReference type="GeneID" id="2845391"/>
<dbReference type="KEGG" id="pto:PTO0660"/>
<dbReference type="PATRIC" id="fig|263820.9.peg.693"/>
<dbReference type="eggNOG" id="arCOG04087">
    <property type="taxonomic scope" value="Archaea"/>
</dbReference>
<dbReference type="HOGENOM" id="CLU_065898_0_1_2"/>
<dbReference type="InParanoid" id="Q6L1A7"/>
<dbReference type="OrthoDB" id="38155at2157"/>
<dbReference type="Proteomes" id="UP000000438">
    <property type="component" value="Chromosome"/>
</dbReference>
<dbReference type="GO" id="GO:0022627">
    <property type="term" value="C:cytosolic small ribosomal subunit"/>
    <property type="evidence" value="ECO:0007669"/>
    <property type="project" value="TreeGrafter"/>
</dbReference>
<dbReference type="GO" id="GO:0019843">
    <property type="term" value="F:rRNA binding"/>
    <property type="evidence" value="ECO:0007669"/>
    <property type="project" value="UniProtKB-UniRule"/>
</dbReference>
<dbReference type="GO" id="GO:0003735">
    <property type="term" value="F:structural constituent of ribosome"/>
    <property type="evidence" value="ECO:0007669"/>
    <property type="project" value="InterPro"/>
</dbReference>
<dbReference type="GO" id="GO:0006412">
    <property type="term" value="P:translation"/>
    <property type="evidence" value="ECO:0007669"/>
    <property type="project" value="UniProtKB-UniRule"/>
</dbReference>
<dbReference type="FunFam" id="3.30.160.20:FF:000002">
    <property type="entry name" value="40S ribosomal protein S2"/>
    <property type="match status" value="1"/>
</dbReference>
<dbReference type="FunFam" id="3.30.230.10:FF:000004">
    <property type="entry name" value="40S ribosomal protein S2"/>
    <property type="match status" value="1"/>
</dbReference>
<dbReference type="Gene3D" id="3.30.160.20">
    <property type="match status" value="1"/>
</dbReference>
<dbReference type="Gene3D" id="3.30.230.10">
    <property type="match status" value="1"/>
</dbReference>
<dbReference type="HAMAP" id="MF_01307_A">
    <property type="entry name" value="Ribosomal_uS5_A"/>
    <property type="match status" value="1"/>
</dbReference>
<dbReference type="InterPro" id="IPR020568">
    <property type="entry name" value="Ribosomal_Su5_D2-typ_SF"/>
</dbReference>
<dbReference type="InterPro" id="IPR000851">
    <property type="entry name" value="Ribosomal_uS5"/>
</dbReference>
<dbReference type="InterPro" id="IPR047866">
    <property type="entry name" value="Ribosomal_uS5_arc"/>
</dbReference>
<dbReference type="InterPro" id="IPR005324">
    <property type="entry name" value="Ribosomal_uS5_C"/>
</dbReference>
<dbReference type="InterPro" id="IPR005711">
    <property type="entry name" value="Ribosomal_uS5_euk/arc"/>
</dbReference>
<dbReference type="InterPro" id="IPR013810">
    <property type="entry name" value="Ribosomal_uS5_N"/>
</dbReference>
<dbReference type="InterPro" id="IPR018192">
    <property type="entry name" value="Ribosomal_uS5_N_CS"/>
</dbReference>
<dbReference type="InterPro" id="IPR014721">
    <property type="entry name" value="Ribsml_uS5_D2-typ_fold_subgr"/>
</dbReference>
<dbReference type="NCBIfam" id="NF003125">
    <property type="entry name" value="PRK04044.1"/>
    <property type="match status" value="1"/>
</dbReference>
<dbReference type="NCBIfam" id="TIGR01020">
    <property type="entry name" value="uS5_euk_arch"/>
    <property type="match status" value="1"/>
</dbReference>
<dbReference type="PANTHER" id="PTHR13718:SF4">
    <property type="entry name" value="40S RIBOSOMAL PROTEIN S2"/>
    <property type="match status" value="1"/>
</dbReference>
<dbReference type="PANTHER" id="PTHR13718">
    <property type="entry name" value="RIBOSOMAL S SUBUNIT"/>
    <property type="match status" value="1"/>
</dbReference>
<dbReference type="Pfam" id="PF00333">
    <property type="entry name" value="Ribosomal_S5"/>
    <property type="match status" value="1"/>
</dbReference>
<dbReference type="Pfam" id="PF03719">
    <property type="entry name" value="Ribosomal_S5_C"/>
    <property type="match status" value="1"/>
</dbReference>
<dbReference type="SUPFAM" id="SSF54768">
    <property type="entry name" value="dsRNA-binding domain-like"/>
    <property type="match status" value="1"/>
</dbReference>
<dbReference type="SUPFAM" id="SSF54211">
    <property type="entry name" value="Ribosomal protein S5 domain 2-like"/>
    <property type="match status" value="1"/>
</dbReference>
<dbReference type="PROSITE" id="PS00585">
    <property type="entry name" value="RIBOSOMAL_S5"/>
    <property type="match status" value="1"/>
</dbReference>
<dbReference type="PROSITE" id="PS50881">
    <property type="entry name" value="S5_DSRBD"/>
    <property type="match status" value="1"/>
</dbReference>
<accession>Q6L1A7</accession>
<comment type="function">
    <text evidence="1">With S4 and S12 plays an important role in translational accuracy.</text>
</comment>
<comment type="subunit">
    <text evidence="1">Part of the 30S ribosomal subunit. Contacts protein S4.</text>
</comment>
<comment type="domain">
    <text>The N-terminal domain interacts with the head of the 30S subunit; the C-terminal domain interacts with the body and contacts protein S4. The interaction surface between S4 and S5 is involved in control of translational fidelity.</text>
</comment>
<comment type="similarity">
    <text evidence="1">Belongs to the universal ribosomal protein uS5 family.</text>
</comment>
<keyword id="KW-0687">Ribonucleoprotein</keyword>
<keyword id="KW-0689">Ribosomal protein</keyword>
<keyword id="KW-0694">RNA-binding</keyword>
<keyword id="KW-0699">rRNA-binding</keyword>
<name>RS5_PICTO</name>
<evidence type="ECO:0000255" key="1">
    <source>
        <dbReference type="HAMAP-Rule" id="MF_01307"/>
    </source>
</evidence>
<evidence type="ECO:0000305" key="2"/>